<feature type="chain" id="PRO_0000451460" description="Nicotinate N-methyltransferase 1">
    <location>
        <begin position="1"/>
        <end position="359"/>
    </location>
</feature>
<feature type="binding site" evidence="1">
    <location>
        <position position="226"/>
    </location>
    <ligand>
        <name>S-adenosyl-L-methionine</name>
        <dbReference type="ChEBI" id="CHEBI:59789"/>
    </ligand>
</feature>
<feature type="mutagenesis site" description="Reduces catalytic activity 4-fold." evidence="2">
    <original>N</original>
    <variation>S</variation>
    <location>
        <position position="21"/>
    </location>
</feature>
<feature type="mutagenesis site" description="Reduces catalytic activity 2-fold." evidence="2">
    <original>Y</original>
    <variation>L</variation>
    <location>
        <position position="120"/>
    </location>
</feature>
<feature type="mutagenesis site" description="Loss of catalytic activity." evidence="2">
    <original>H</original>
    <variation>N</variation>
    <location>
        <position position="124"/>
    </location>
</feature>
<feature type="mutagenesis site" description="Loss of catalytic activity." evidence="2">
    <original>T</original>
    <variation>H</variation>
    <location>
        <position position="264"/>
    </location>
</feature>
<organism>
    <name type="scientific">Arabidopsis thaliana</name>
    <name type="common">Mouse-ear cress</name>
    <dbReference type="NCBI Taxonomy" id="3702"/>
    <lineage>
        <taxon>Eukaryota</taxon>
        <taxon>Viridiplantae</taxon>
        <taxon>Streptophyta</taxon>
        <taxon>Embryophyta</taxon>
        <taxon>Tracheophyta</taxon>
        <taxon>Spermatophyta</taxon>
        <taxon>Magnoliopsida</taxon>
        <taxon>eudicotyledons</taxon>
        <taxon>Gunneridae</taxon>
        <taxon>Pentapetalae</taxon>
        <taxon>rosids</taxon>
        <taxon>malvids</taxon>
        <taxon>Brassicales</taxon>
        <taxon>Brassicaceae</taxon>
        <taxon>Camelineae</taxon>
        <taxon>Arabidopsis</taxon>
    </lineage>
</organism>
<dbReference type="EC" id="2.1.1.7" evidence="2"/>
<dbReference type="EMBL" id="AL132958">
    <property type="protein sequence ID" value="CAB64217.1"/>
    <property type="molecule type" value="Genomic_DNA"/>
</dbReference>
<dbReference type="EMBL" id="CP002686">
    <property type="protein sequence ID" value="AEE79041.1"/>
    <property type="molecule type" value="Genomic_DNA"/>
</dbReference>
<dbReference type="EMBL" id="AF367289">
    <property type="protein sequence ID" value="AAK56277.1"/>
    <property type="molecule type" value="mRNA"/>
</dbReference>
<dbReference type="EMBL" id="AY133618">
    <property type="protein sequence ID" value="AAM91448.1"/>
    <property type="molecule type" value="mRNA"/>
</dbReference>
<dbReference type="PIR" id="T46160">
    <property type="entry name" value="T46160"/>
</dbReference>
<dbReference type="RefSeq" id="NP_190882.1">
    <property type="nucleotide sequence ID" value="NM_115174.2"/>
</dbReference>
<dbReference type="SMR" id="Q9SCP7"/>
<dbReference type="FunCoup" id="Q9SCP7">
    <property type="interactions" value="442"/>
</dbReference>
<dbReference type="STRING" id="3702.Q9SCP7"/>
<dbReference type="PaxDb" id="3702-AT3G53140.1"/>
<dbReference type="ProMEX" id="Q9SCP7"/>
<dbReference type="ProteomicsDB" id="189785"/>
<dbReference type="EnsemblPlants" id="AT3G53140.1">
    <property type="protein sequence ID" value="AT3G53140.1"/>
    <property type="gene ID" value="AT3G53140"/>
</dbReference>
<dbReference type="GeneID" id="824480"/>
<dbReference type="Gramene" id="AT3G53140.1">
    <property type="protein sequence ID" value="AT3G53140.1"/>
    <property type="gene ID" value="AT3G53140"/>
</dbReference>
<dbReference type="KEGG" id="ath:AT3G53140"/>
<dbReference type="Araport" id="AT3G53140"/>
<dbReference type="TAIR" id="AT3G53140">
    <property type="gene designation" value="NANMT"/>
</dbReference>
<dbReference type="eggNOG" id="KOG3178">
    <property type="taxonomic scope" value="Eukaryota"/>
</dbReference>
<dbReference type="HOGENOM" id="CLU_005533_12_1_1"/>
<dbReference type="InParanoid" id="Q9SCP7"/>
<dbReference type="OMA" id="CTEPWTW"/>
<dbReference type="OrthoDB" id="1606438at2759"/>
<dbReference type="PhylomeDB" id="Q9SCP7"/>
<dbReference type="BioCyc" id="ARA:AT3G53140-MONOMER"/>
<dbReference type="BRENDA" id="2.1.1.7">
    <property type="organism ID" value="399"/>
</dbReference>
<dbReference type="SABIO-RK" id="Q9SCP7"/>
<dbReference type="PRO" id="PR:Q9SCP7"/>
<dbReference type="Proteomes" id="UP000006548">
    <property type="component" value="Chromosome 3"/>
</dbReference>
<dbReference type="ExpressionAtlas" id="Q9SCP7">
    <property type="expression patterns" value="baseline"/>
</dbReference>
<dbReference type="GO" id="GO:0005829">
    <property type="term" value="C:cytosol"/>
    <property type="evidence" value="ECO:0000314"/>
    <property type="project" value="TAIR"/>
</dbReference>
<dbReference type="GO" id="GO:0008168">
    <property type="term" value="F:methyltransferase activity"/>
    <property type="evidence" value="ECO:0000314"/>
    <property type="project" value="TAIR"/>
</dbReference>
<dbReference type="GO" id="GO:0008938">
    <property type="term" value="F:nicotinate N-methyltransferase activity"/>
    <property type="evidence" value="ECO:0000314"/>
    <property type="project" value="TAIR"/>
</dbReference>
<dbReference type="GO" id="GO:0008171">
    <property type="term" value="F:O-methyltransferase activity"/>
    <property type="evidence" value="ECO:0007669"/>
    <property type="project" value="InterPro"/>
</dbReference>
<dbReference type="GO" id="GO:0046983">
    <property type="term" value="F:protein dimerization activity"/>
    <property type="evidence" value="ECO:0007669"/>
    <property type="project" value="InterPro"/>
</dbReference>
<dbReference type="GO" id="GO:0032259">
    <property type="term" value="P:methylation"/>
    <property type="evidence" value="ECO:0007669"/>
    <property type="project" value="UniProtKB-KW"/>
</dbReference>
<dbReference type="GO" id="GO:1901847">
    <property type="term" value="P:nicotinate metabolic process"/>
    <property type="evidence" value="ECO:0000314"/>
    <property type="project" value="TAIR"/>
</dbReference>
<dbReference type="FunFam" id="1.10.10.10:FF:000604">
    <property type="entry name" value="Caffeic acid 3-O-methyltransferase"/>
    <property type="match status" value="1"/>
</dbReference>
<dbReference type="FunFam" id="3.40.50.150:FF:000223">
    <property type="entry name" value="Caffeic acid 3-O-methyltransferase"/>
    <property type="match status" value="1"/>
</dbReference>
<dbReference type="Gene3D" id="3.40.50.150">
    <property type="entry name" value="Vaccinia Virus protein VP39"/>
    <property type="match status" value="1"/>
</dbReference>
<dbReference type="Gene3D" id="1.10.10.10">
    <property type="entry name" value="Winged helix-like DNA-binding domain superfamily/Winged helix DNA-binding domain"/>
    <property type="match status" value="1"/>
</dbReference>
<dbReference type="InterPro" id="IPR016461">
    <property type="entry name" value="COMT-like"/>
</dbReference>
<dbReference type="InterPro" id="IPR001077">
    <property type="entry name" value="O_MeTrfase_dom"/>
</dbReference>
<dbReference type="InterPro" id="IPR012967">
    <property type="entry name" value="Plant_O-MeTrfase_dimerisation"/>
</dbReference>
<dbReference type="InterPro" id="IPR029063">
    <property type="entry name" value="SAM-dependent_MTases_sf"/>
</dbReference>
<dbReference type="InterPro" id="IPR036388">
    <property type="entry name" value="WH-like_DNA-bd_sf"/>
</dbReference>
<dbReference type="InterPro" id="IPR036390">
    <property type="entry name" value="WH_DNA-bd_sf"/>
</dbReference>
<dbReference type="PANTHER" id="PTHR11746">
    <property type="entry name" value="O-METHYLTRANSFERASE"/>
    <property type="match status" value="1"/>
</dbReference>
<dbReference type="Pfam" id="PF08100">
    <property type="entry name" value="Dimerisation"/>
    <property type="match status" value="1"/>
</dbReference>
<dbReference type="Pfam" id="PF00891">
    <property type="entry name" value="Methyltransf_2"/>
    <property type="match status" value="1"/>
</dbReference>
<dbReference type="PIRSF" id="PIRSF005739">
    <property type="entry name" value="O-mtase"/>
    <property type="match status" value="1"/>
</dbReference>
<dbReference type="SUPFAM" id="SSF53335">
    <property type="entry name" value="S-adenosyl-L-methionine-dependent methyltransferases"/>
    <property type="match status" value="1"/>
</dbReference>
<dbReference type="SUPFAM" id="SSF46785">
    <property type="entry name" value="Winged helix' DNA-binding domain"/>
    <property type="match status" value="1"/>
</dbReference>
<dbReference type="PROSITE" id="PS51683">
    <property type="entry name" value="SAM_OMT_II"/>
    <property type="match status" value="1"/>
</dbReference>
<gene>
    <name evidence="3" type="primary">NANMT1</name>
    <name evidence="5" type="ordered locus">At3g53140</name>
    <name evidence="6" type="ORF">T4D2.70</name>
</gene>
<comment type="function">
    <text evidence="2">Involved in nicotinate detoxification in planta (PubMed:28533213). Catalyzes the conversion of nicotinate to N-methylnicotinate, which is a detoxified form of endogenous nicotinate in planta (PubMed:28533213).</text>
</comment>
<comment type="catalytic activity">
    <reaction evidence="2">
        <text>nicotinate + S-adenosyl-L-methionine = N-methylnicotinate + S-adenosyl-L-homocysteine</text>
        <dbReference type="Rhea" id="RHEA:20241"/>
        <dbReference type="ChEBI" id="CHEBI:18123"/>
        <dbReference type="ChEBI" id="CHEBI:32544"/>
        <dbReference type="ChEBI" id="CHEBI:57856"/>
        <dbReference type="ChEBI" id="CHEBI:59789"/>
        <dbReference type="EC" id="2.1.1.7"/>
    </reaction>
    <physiologicalReaction direction="left-to-right" evidence="2">
        <dbReference type="Rhea" id="RHEA:20242"/>
    </physiologicalReaction>
</comment>
<comment type="biophysicochemical properties">
    <kinetics>
        <KM evidence="2">38.7 uM for nicotinate</KM>
        <KM evidence="2">52.13 uM for S-adenosyl-L-methionine</KM>
        <text evidence="2">kcat is 3.52 sec(-1) with nicotinate as substrate (PubMed:28533213). kcat is 3.01 sec(-1) with S-adenosyl-L-methionine as substrate (PubMed:28533213).</text>
    </kinetics>
</comment>
<comment type="subcellular location">
    <subcellularLocation>
        <location evidence="2">Cytoplasm</location>
        <location evidence="2">Cytosol</location>
    </subcellularLocation>
</comment>
<comment type="tissue specificity">
    <text evidence="2">Highly expressed in anthers, pistils, developing siliques, and developing seeds.</text>
</comment>
<comment type="similarity">
    <text evidence="4">Belongs to the class I-like SAM-binding methyltransferase superfamily. Cation-independent O-methyltransferase family.</text>
</comment>
<reference key="1">
    <citation type="journal article" date="2000" name="Nature">
        <title>Sequence and analysis of chromosome 3 of the plant Arabidopsis thaliana.</title>
        <authorList>
            <person name="Salanoubat M."/>
            <person name="Lemcke K."/>
            <person name="Rieger M."/>
            <person name="Ansorge W."/>
            <person name="Unseld M."/>
            <person name="Fartmann B."/>
            <person name="Valle G."/>
            <person name="Bloecker H."/>
            <person name="Perez-Alonso M."/>
            <person name="Obermaier B."/>
            <person name="Delseny M."/>
            <person name="Boutry M."/>
            <person name="Grivell L.A."/>
            <person name="Mache R."/>
            <person name="Puigdomenech P."/>
            <person name="De Simone V."/>
            <person name="Choisne N."/>
            <person name="Artiguenave F."/>
            <person name="Robert C."/>
            <person name="Brottier P."/>
            <person name="Wincker P."/>
            <person name="Cattolico L."/>
            <person name="Weissenbach J."/>
            <person name="Saurin W."/>
            <person name="Quetier F."/>
            <person name="Schaefer M."/>
            <person name="Mueller-Auer S."/>
            <person name="Gabel C."/>
            <person name="Fuchs M."/>
            <person name="Benes V."/>
            <person name="Wurmbach E."/>
            <person name="Drzonek H."/>
            <person name="Erfle H."/>
            <person name="Jordan N."/>
            <person name="Bangert S."/>
            <person name="Wiedelmann R."/>
            <person name="Kranz H."/>
            <person name="Voss H."/>
            <person name="Holland R."/>
            <person name="Brandt P."/>
            <person name="Nyakatura G."/>
            <person name="Vezzi A."/>
            <person name="D'Angelo M."/>
            <person name="Pallavicini A."/>
            <person name="Toppo S."/>
            <person name="Simionati B."/>
            <person name="Conrad A."/>
            <person name="Hornischer K."/>
            <person name="Kauer G."/>
            <person name="Loehnert T.-H."/>
            <person name="Nordsiek G."/>
            <person name="Reichelt J."/>
            <person name="Scharfe M."/>
            <person name="Schoen O."/>
            <person name="Bargues M."/>
            <person name="Terol J."/>
            <person name="Climent J."/>
            <person name="Navarro P."/>
            <person name="Collado C."/>
            <person name="Perez-Perez A."/>
            <person name="Ottenwaelder B."/>
            <person name="Duchemin D."/>
            <person name="Cooke R."/>
            <person name="Laudie M."/>
            <person name="Berger-Llauro C."/>
            <person name="Purnelle B."/>
            <person name="Masuy D."/>
            <person name="de Haan M."/>
            <person name="Maarse A.C."/>
            <person name="Alcaraz J.-P."/>
            <person name="Cottet A."/>
            <person name="Casacuberta E."/>
            <person name="Monfort A."/>
            <person name="Argiriou A."/>
            <person name="Flores M."/>
            <person name="Liguori R."/>
            <person name="Vitale D."/>
            <person name="Mannhaupt G."/>
            <person name="Haase D."/>
            <person name="Schoof H."/>
            <person name="Rudd S."/>
            <person name="Zaccaria P."/>
            <person name="Mewes H.-W."/>
            <person name="Mayer K.F.X."/>
            <person name="Kaul S."/>
            <person name="Town C.D."/>
            <person name="Koo H.L."/>
            <person name="Tallon L.J."/>
            <person name="Jenkins J."/>
            <person name="Rooney T."/>
            <person name="Rizzo M."/>
            <person name="Walts A."/>
            <person name="Utterback T."/>
            <person name="Fujii C.Y."/>
            <person name="Shea T.P."/>
            <person name="Creasy T.H."/>
            <person name="Haas B."/>
            <person name="Maiti R."/>
            <person name="Wu D."/>
            <person name="Peterson J."/>
            <person name="Van Aken S."/>
            <person name="Pai G."/>
            <person name="Militscher J."/>
            <person name="Sellers P."/>
            <person name="Gill J.E."/>
            <person name="Feldblyum T.V."/>
            <person name="Preuss D."/>
            <person name="Lin X."/>
            <person name="Nierman W.C."/>
            <person name="Salzberg S.L."/>
            <person name="White O."/>
            <person name="Venter J.C."/>
            <person name="Fraser C.M."/>
            <person name="Kaneko T."/>
            <person name="Nakamura Y."/>
            <person name="Sato S."/>
            <person name="Kato T."/>
            <person name="Asamizu E."/>
            <person name="Sasamoto S."/>
            <person name="Kimura T."/>
            <person name="Idesawa K."/>
            <person name="Kawashima K."/>
            <person name="Kishida Y."/>
            <person name="Kiyokawa C."/>
            <person name="Kohara M."/>
            <person name="Matsumoto M."/>
            <person name="Matsuno A."/>
            <person name="Muraki A."/>
            <person name="Nakayama S."/>
            <person name="Nakazaki N."/>
            <person name="Shinpo S."/>
            <person name="Takeuchi C."/>
            <person name="Wada T."/>
            <person name="Watanabe A."/>
            <person name="Yamada M."/>
            <person name="Yasuda M."/>
            <person name="Tabata S."/>
        </authorList>
    </citation>
    <scope>NUCLEOTIDE SEQUENCE [LARGE SCALE GENOMIC DNA]</scope>
    <source>
        <strain>cv. Columbia</strain>
    </source>
</reference>
<reference key="2">
    <citation type="journal article" date="2017" name="Plant J.">
        <title>Araport11: a complete reannotation of the Arabidopsis thaliana reference genome.</title>
        <authorList>
            <person name="Cheng C.Y."/>
            <person name="Krishnakumar V."/>
            <person name="Chan A.P."/>
            <person name="Thibaud-Nissen F."/>
            <person name="Schobel S."/>
            <person name="Town C.D."/>
        </authorList>
    </citation>
    <scope>GENOME REANNOTATION</scope>
    <source>
        <strain>cv. Columbia</strain>
    </source>
</reference>
<reference key="3">
    <citation type="journal article" date="2003" name="Science">
        <title>Empirical analysis of transcriptional activity in the Arabidopsis genome.</title>
        <authorList>
            <person name="Yamada K."/>
            <person name="Lim J."/>
            <person name="Dale J.M."/>
            <person name="Chen H."/>
            <person name="Shinn P."/>
            <person name="Palm C.J."/>
            <person name="Southwick A.M."/>
            <person name="Wu H.C."/>
            <person name="Kim C.J."/>
            <person name="Nguyen M."/>
            <person name="Pham P.K."/>
            <person name="Cheuk R.F."/>
            <person name="Karlin-Newmann G."/>
            <person name="Liu S.X."/>
            <person name="Lam B."/>
            <person name="Sakano H."/>
            <person name="Wu T."/>
            <person name="Yu G."/>
            <person name="Miranda M."/>
            <person name="Quach H.L."/>
            <person name="Tripp M."/>
            <person name="Chang C.H."/>
            <person name="Lee J.M."/>
            <person name="Toriumi M.J."/>
            <person name="Chan M.M."/>
            <person name="Tang C.C."/>
            <person name="Onodera C.S."/>
            <person name="Deng J.M."/>
            <person name="Akiyama K."/>
            <person name="Ansari Y."/>
            <person name="Arakawa T."/>
            <person name="Banh J."/>
            <person name="Banno F."/>
            <person name="Bowser L."/>
            <person name="Brooks S.Y."/>
            <person name="Carninci P."/>
            <person name="Chao Q."/>
            <person name="Choy N."/>
            <person name="Enju A."/>
            <person name="Goldsmith A.D."/>
            <person name="Gurjal M."/>
            <person name="Hansen N.F."/>
            <person name="Hayashizaki Y."/>
            <person name="Johnson-Hopson C."/>
            <person name="Hsuan V.W."/>
            <person name="Iida K."/>
            <person name="Karnes M."/>
            <person name="Khan S."/>
            <person name="Koesema E."/>
            <person name="Ishida J."/>
            <person name="Jiang P.X."/>
            <person name="Jones T."/>
            <person name="Kawai J."/>
            <person name="Kamiya A."/>
            <person name="Meyers C."/>
            <person name="Nakajima M."/>
            <person name="Narusaka M."/>
            <person name="Seki M."/>
            <person name="Sakurai T."/>
            <person name="Satou M."/>
            <person name="Tamse R."/>
            <person name="Vaysberg M."/>
            <person name="Wallender E.K."/>
            <person name="Wong C."/>
            <person name="Yamamura Y."/>
            <person name="Yuan S."/>
            <person name="Shinozaki K."/>
            <person name="Davis R.W."/>
            <person name="Theologis A."/>
            <person name="Ecker J.R."/>
        </authorList>
    </citation>
    <scope>NUCLEOTIDE SEQUENCE [LARGE SCALE MRNA]</scope>
    <source>
        <strain>cv. Columbia</strain>
    </source>
</reference>
<reference key="4">
    <citation type="journal article" date="2017" name="Plant Physiol.">
        <title>A novel N-methyltransferase in Arabidopsis appears to feed a conserved pathway for nicotinate detoxification among land plants and is associated with lignin biosynthesis.</title>
        <authorList>
            <person name="Li W."/>
            <person name="Zhang F."/>
            <person name="Wu R."/>
            <person name="Jia L."/>
            <person name="Li G."/>
            <person name="Guo Y."/>
            <person name="Liu C."/>
            <person name="Wang G."/>
        </authorList>
    </citation>
    <scope>FUNCTION</scope>
    <scope>CATALYTIC ACTIVITY</scope>
    <scope>BIOPHYSICOCHEMICAL PROPERTIES</scope>
    <scope>SUBCELLULAR LOCATION</scope>
    <scope>TISSUE SPECIFICITY</scope>
    <scope>MUTAGENESIS OF ASN-21; TYR-120; HIS-124 AND THR-264</scope>
</reference>
<evidence type="ECO:0000255" key="1">
    <source>
        <dbReference type="PROSITE-ProRule" id="PRU01020"/>
    </source>
</evidence>
<evidence type="ECO:0000269" key="2">
    <source>
    </source>
</evidence>
<evidence type="ECO:0000303" key="3">
    <source>
    </source>
</evidence>
<evidence type="ECO:0000305" key="4"/>
<evidence type="ECO:0000312" key="5">
    <source>
        <dbReference type="Araport" id="AT3G53140"/>
    </source>
</evidence>
<evidence type="ECO:0000312" key="6">
    <source>
        <dbReference type="EMBL" id="CAB64217.1"/>
    </source>
</evidence>
<protein>
    <recommendedName>
        <fullName evidence="3">Nicotinate N-methyltransferase 1</fullName>
        <shortName evidence="3">AtNANMT1</shortName>
        <ecNumber evidence="2">2.1.1.7</ecNumber>
    </recommendedName>
</protein>
<sequence>MENESSESRNRARLAIMELANMISVPMSLNAAVRLGIADAIWNGGANSPLSAAEILPRLHLPSHTTIGGDPENLQRILRMLTSYGVFSEHLVGSIERKYSLTDVGKTLVTDSGGLSYAAYVLQHHQEALMRAWPLVHTAVVEPETEPYVKANGEAAYAQYGKSEEMNGLMQKAMSGVSVPFMKAILDGYDGFKSVDILVDVGGSAGDCLRMILQQFPNVREGINFDLPEVVAKAPNIPGVTHVGGDMFQSVPSADAIFMKWVLTTWTDEECKQIMKNCYNALPVGGKLIACEPVLPKETDESHRTRALLEGDIFVMTIYRTKGKHRTEEEFIELGLSAGFPTFRPFYIDYFYTILEFQK</sequence>
<proteinExistence type="evidence at protein level"/>
<name>NAMT1_ARATH</name>
<keyword id="KW-0963">Cytoplasm</keyword>
<keyword id="KW-0489">Methyltransferase</keyword>
<keyword id="KW-1185">Reference proteome</keyword>
<keyword id="KW-0949">S-adenosyl-L-methionine</keyword>
<keyword id="KW-0808">Transferase</keyword>
<accession>Q9SCP7</accession>
<accession>A0A178VFV7</accession>